<sequence>MPSDSKKPTIIYPCLWDYRVIMTTKDTSTLKELLETYQRPFKLEFKNTSKNAKFYSFNVSMEVSNESERNEIFQKISQLDKVVQTL</sequence>
<dbReference type="EMBL" id="AE000511">
    <property type="protein sequence ID" value="AAD07569.1"/>
    <property type="molecule type" value="Genomic_DNA"/>
</dbReference>
<dbReference type="PIR" id="G64581">
    <property type="entry name" value="G64581"/>
</dbReference>
<dbReference type="RefSeq" id="NP_207292.1">
    <property type="nucleotide sequence ID" value="NC_000915.1"/>
</dbReference>
<dbReference type="RefSeq" id="WP_001138777.1">
    <property type="nucleotide sequence ID" value="NC_018939.1"/>
</dbReference>
<dbReference type="PDB" id="2H9Z">
    <property type="method" value="NMR"/>
    <property type="chains" value="A=1-86"/>
</dbReference>
<dbReference type="PDB" id="2JOQ">
    <property type="method" value="NMR"/>
    <property type="chains" value="A=1-86"/>
</dbReference>
<dbReference type="PDBsum" id="2H9Z"/>
<dbReference type="PDBsum" id="2JOQ"/>
<dbReference type="BMRB" id="O25237"/>
<dbReference type="SMR" id="O25237"/>
<dbReference type="DIP" id="DIP-3435N"/>
<dbReference type="IntAct" id="O25237">
    <property type="interactions" value="7"/>
</dbReference>
<dbReference type="MINT" id="O25237"/>
<dbReference type="STRING" id="85962.HP_0495"/>
<dbReference type="PaxDb" id="85962-C694_02545"/>
<dbReference type="DNASU" id="899257"/>
<dbReference type="EnsemblBacteria" id="AAD07569">
    <property type="protein sequence ID" value="AAD07569"/>
    <property type="gene ID" value="HP_0495"/>
</dbReference>
<dbReference type="KEGG" id="heo:C694_02545"/>
<dbReference type="KEGG" id="hpy:HP_0495"/>
<dbReference type="PATRIC" id="fig|85962.47.peg.533"/>
<dbReference type="InParanoid" id="O25237"/>
<dbReference type="OrthoDB" id="281538at2"/>
<dbReference type="EvolutionaryTrace" id="O25237"/>
<dbReference type="Proteomes" id="UP000000429">
    <property type="component" value="Chromosome"/>
</dbReference>
<dbReference type="Gene3D" id="3.30.70.260">
    <property type="match status" value="1"/>
</dbReference>
<dbReference type="InterPro" id="IPR007454">
    <property type="entry name" value="UPF0250_YbeD-like"/>
</dbReference>
<dbReference type="InterPro" id="IPR027471">
    <property type="entry name" value="YbeD-like_sf"/>
</dbReference>
<dbReference type="Pfam" id="PF04359">
    <property type="entry name" value="DUF493"/>
    <property type="match status" value="1"/>
</dbReference>
<dbReference type="SUPFAM" id="SSF117991">
    <property type="entry name" value="YbeD/HP0495-like"/>
    <property type="match status" value="1"/>
</dbReference>
<evidence type="ECO:0000305" key="1"/>
<evidence type="ECO:0007829" key="2">
    <source>
        <dbReference type="PDB" id="2H9Z"/>
    </source>
</evidence>
<evidence type="ECO:0007829" key="3">
    <source>
        <dbReference type="PDB" id="2JOQ"/>
    </source>
</evidence>
<keyword id="KW-0002">3D-structure</keyword>
<keyword id="KW-1185">Reference proteome</keyword>
<gene>
    <name type="ordered locus">HP_0495</name>
</gene>
<name>Y495_HELPY</name>
<protein>
    <recommendedName>
        <fullName>Uncharacterized protein HP_0495</fullName>
    </recommendedName>
</protein>
<proteinExistence type="evidence at protein level"/>
<organism>
    <name type="scientific">Helicobacter pylori (strain ATCC 700392 / 26695)</name>
    <name type="common">Campylobacter pylori</name>
    <dbReference type="NCBI Taxonomy" id="85962"/>
    <lineage>
        <taxon>Bacteria</taxon>
        <taxon>Pseudomonadati</taxon>
        <taxon>Campylobacterota</taxon>
        <taxon>Epsilonproteobacteria</taxon>
        <taxon>Campylobacterales</taxon>
        <taxon>Helicobacteraceae</taxon>
        <taxon>Helicobacter</taxon>
    </lineage>
</organism>
<reference key="1">
    <citation type="journal article" date="1997" name="Nature">
        <title>The complete genome sequence of the gastric pathogen Helicobacter pylori.</title>
        <authorList>
            <person name="Tomb J.-F."/>
            <person name="White O."/>
            <person name="Kerlavage A.R."/>
            <person name="Clayton R.A."/>
            <person name="Sutton G.G."/>
            <person name="Fleischmann R.D."/>
            <person name="Ketchum K.A."/>
            <person name="Klenk H.-P."/>
            <person name="Gill S.R."/>
            <person name="Dougherty B.A."/>
            <person name="Nelson K.E."/>
            <person name="Quackenbush J."/>
            <person name="Zhou L."/>
            <person name="Kirkness E.F."/>
            <person name="Peterson S.N."/>
            <person name="Loftus B.J."/>
            <person name="Richardson D.L."/>
            <person name="Dodson R.J."/>
            <person name="Khalak H.G."/>
            <person name="Glodek A."/>
            <person name="McKenney K."/>
            <person name="FitzGerald L.M."/>
            <person name="Lee N."/>
            <person name="Adams M.D."/>
            <person name="Hickey E.K."/>
            <person name="Berg D.E."/>
            <person name="Gocayne J.D."/>
            <person name="Utterback T.R."/>
            <person name="Peterson J.D."/>
            <person name="Kelley J.M."/>
            <person name="Cotton M.D."/>
            <person name="Weidman J.F."/>
            <person name="Fujii C."/>
            <person name="Bowman C."/>
            <person name="Watthey L."/>
            <person name="Wallin E."/>
            <person name="Hayes W.S."/>
            <person name="Borodovsky M."/>
            <person name="Karp P.D."/>
            <person name="Smith H.O."/>
            <person name="Fraser C.M."/>
            <person name="Venter J.C."/>
        </authorList>
    </citation>
    <scope>NUCLEOTIDE SEQUENCE [LARGE SCALE GENOMIC DNA]</scope>
    <source>
        <strain>ATCC 700392 / 26695</strain>
    </source>
</reference>
<comment type="similarity">
    <text evidence="1">To C.jejuni CJ0253.</text>
</comment>
<feature type="chain" id="PRO_0000128686" description="Uncharacterized protein HP_0495">
    <location>
        <begin position="1"/>
        <end position="86"/>
    </location>
</feature>
<feature type="strand" evidence="2">
    <location>
        <begin position="14"/>
        <end position="22"/>
    </location>
</feature>
<feature type="helix" evidence="2">
    <location>
        <begin position="28"/>
        <end position="33"/>
    </location>
</feature>
<feature type="turn" evidence="3">
    <location>
        <begin position="36"/>
        <end position="38"/>
    </location>
</feature>
<feature type="strand" evidence="2">
    <location>
        <begin position="39"/>
        <end position="42"/>
    </location>
</feature>
<feature type="strand" evidence="2">
    <location>
        <begin position="55"/>
        <end position="62"/>
    </location>
</feature>
<feature type="helix" evidence="2">
    <location>
        <begin position="66"/>
        <end position="76"/>
    </location>
</feature>
<feature type="strand" evidence="2">
    <location>
        <begin position="82"/>
        <end position="85"/>
    </location>
</feature>
<accession>O25237</accession>